<reference key="1">
    <citation type="journal article" date="2007" name="PLoS Genet.">
        <title>Patterns and implications of gene gain and loss in the evolution of Prochlorococcus.</title>
        <authorList>
            <person name="Kettler G.C."/>
            <person name="Martiny A.C."/>
            <person name="Huang K."/>
            <person name="Zucker J."/>
            <person name="Coleman M.L."/>
            <person name="Rodrigue S."/>
            <person name="Chen F."/>
            <person name="Lapidus A."/>
            <person name="Ferriera S."/>
            <person name="Johnson J."/>
            <person name="Steglich C."/>
            <person name="Church G.M."/>
            <person name="Richardson P."/>
            <person name="Chisholm S.W."/>
        </authorList>
    </citation>
    <scope>NUCLEOTIDE SEQUENCE [LARGE SCALE GENOMIC DNA]</scope>
    <source>
        <strain>MIT 9215</strain>
    </source>
</reference>
<keyword id="KW-0489">Methyltransferase</keyword>
<keyword id="KW-0949">S-adenosyl-L-methionine</keyword>
<keyword id="KW-0808">Transferase</keyword>
<keyword id="KW-0819">tRNA processing</keyword>
<sequence>MRQHVNPLSSNFNKIERIPSLSEMFGDSKLNLHLDIGCAAGEFLFNLASVNTSWNYLGIEIREKLVKNAKLKVFEREIKNLYFVFGNANNILNDVQSKYIIRNIKSISFNFPDPWFKKRHYKRRVIQPEFINVLSNQLQKGTLIFIKTDVKELFDYMDRTISSNFYFKKIDKKDFNYSESFNPNKVKTNRENYVIVNQINIFERIYMRI</sequence>
<name>TRMB_PROM2</name>
<accession>A8G2P9</accession>
<dbReference type="EC" id="2.1.1.33" evidence="2"/>
<dbReference type="EMBL" id="CP000825">
    <property type="protein sequence ID" value="ABV49880.1"/>
    <property type="molecule type" value="Genomic_DNA"/>
</dbReference>
<dbReference type="RefSeq" id="WP_012007043.1">
    <property type="nucleotide sequence ID" value="NC_009840.1"/>
</dbReference>
<dbReference type="SMR" id="A8G2P9"/>
<dbReference type="STRING" id="93060.P9215_02631"/>
<dbReference type="KEGG" id="pmh:P9215_02631"/>
<dbReference type="eggNOG" id="COG0220">
    <property type="taxonomic scope" value="Bacteria"/>
</dbReference>
<dbReference type="HOGENOM" id="CLU_050910_1_3_3"/>
<dbReference type="OrthoDB" id="9802090at2"/>
<dbReference type="UniPathway" id="UPA00989"/>
<dbReference type="Proteomes" id="UP000002014">
    <property type="component" value="Chromosome"/>
</dbReference>
<dbReference type="GO" id="GO:0043527">
    <property type="term" value="C:tRNA methyltransferase complex"/>
    <property type="evidence" value="ECO:0007669"/>
    <property type="project" value="TreeGrafter"/>
</dbReference>
<dbReference type="GO" id="GO:0008176">
    <property type="term" value="F:tRNA (guanine(46)-N7)-methyltransferase activity"/>
    <property type="evidence" value="ECO:0007669"/>
    <property type="project" value="UniProtKB-UniRule"/>
</dbReference>
<dbReference type="CDD" id="cd02440">
    <property type="entry name" value="AdoMet_MTases"/>
    <property type="match status" value="1"/>
</dbReference>
<dbReference type="Gene3D" id="3.40.50.150">
    <property type="entry name" value="Vaccinia Virus protein VP39"/>
    <property type="match status" value="1"/>
</dbReference>
<dbReference type="HAMAP" id="MF_01057">
    <property type="entry name" value="tRNA_methyltr_TrmB"/>
    <property type="match status" value="1"/>
</dbReference>
<dbReference type="InterPro" id="IPR029063">
    <property type="entry name" value="SAM-dependent_MTases_sf"/>
</dbReference>
<dbReference type="InterPro" id="IPR003358">
    <property type="entry name" value="tRNA_(Gua-N-7)_MeTrfase_Trmb"/>
</dbReference>
<dbReference type="InterPro" id="IPR055361">
    <property type="entry name" value="tRNA_methyltr_TrmB_bact"/>
</dbReference>
<dbReference type="NCBIfam" id="TIGR00091">
    <property type="entry name" value="tRNA (guanosine(46)-N7)-methyltransferase TrmB"/>
    <property type="match status" value="1"/>
</dbReference>
<dbReference type="PANTHER" id="PTHR23417">
    <property type="entry name" value="3-DEOXY-D-MANNO-OCTULOSONIC-ACID TRANSFERASE/TRNA GUANINE-N 7 - -METHYLTRANSFERASE"/>
    <property type="match status" value="1"/>
</dbReference>
<dbReference type="PANTHER" id="PTHR23417:SF21">
    <property type="entry name" value="TRNA (GUANINE-N(7)-)-METHYLTRANSFERASE"/>
    <property type="match status" value="1"/>
</dbReference>
<dbReference type="Pfam" id="PF02390">
    <property type="entry name" value="Methyltransf_4"/>
    <property type="match status" value="1"/>
</dbReference>
<dbReference type="SUPFAM" id="SSF53335">
    <property type="entry name" value="S-adenosyl-L-methionine-dependent methyltransferases"/>
    <property type="match status" value="1"/>
</dbReference>
<dbReference type="PROSITE" id="PS51625">
    <property type="entry name" value="SAM_MT_TRMB"/>
    <property type="match status" value="1"/>
</dbReference>
<evidence type="ECO:0000250" key="1"/>
<evidence type="ECO:0000255" key="2">
    <source>
        <dbReference type="HAMAP-Rule" id="MF_01057"/>
    </source>
</evidence>
<organism>
    <name type="scientific">Prochlorococcus marinus (strain MIT 9215)</name>
    <dbReference type="NCBI Taxonomy" id="93060"/>
    <lineage>
        <taxon>Bacteria</taxon>
        <taxon>Bacillati</taxon>
        <taxon>Cyanobacteriota</taxon>
        <taxon>Cyanophyceae</taxon>
        <taxon>Synechococcales</taxon>
        <taxon>Prochlorococcaceae</taxon>
        <taxon>Prochlorococcus</taxon>
    </lineage>
</organism>
<feature type="chain" id="PRO_1000064402" description="tRNA (guanine-N(7)-)-methyltransferase">
    <location>
        <begin position="1"/>
        <end position="209"/>
    </location>
</feature>
<feature type="active site" evidence="1">
    <location>
        <position position="113"/>
    </location>
</feature>
<feature type="binding site" evidence="2">
    <location>
        <position position="35"/>
    </location>
    <ligand>
        <name>S-adenosyl-L-methionine</name>
        <dbReference type="ChEBI" id="CHEBI:59789"/>
    </ligand>
</feature>
<feature type="binding site" evidence="2">
    <location>
        <position position="60"/>
    </location>
    <ligand>
        <name>S-adenosyl-L-methionine</name>
        <dbReference type="ChEBI" id="CHEBI:59789"/>
    </ligand>
</feature>
<feature type="binding site" evidence="2">
    <location>
        <position position="87"/>
    </location>
    <ligand>
        <name>S-adenosyl-L-methionine</name>
        <dbReference type="ChEBI" id="CHEBI:59789"/>
    </ligand>
</feature>
<feature type="binding site" evidence="2">
    <location>
        <position position="113"/>
    </location>
    <ligand>
        <name>S-adenosyl-L-methionine</name>
        <dbReference type="ChEBI" id="CHEBI:59789"/>
    </ligand>
</feature>
<feature type="binding site" evidence="2">
    <location>
        <position position="117"/>
    </location>
    <ligand>
        <name>substrate</name>
    </ligand>
</feature>
<feature type="binding site" evidence="2">
    <location>
        <position position="149"/>
    </location>
    <ligand>
        <name>substrate</name>
    </ligand>
</feature>
<gene>
    <name evidence="2" type="primary">trmB</name>
    <name type="ordered locus">P9215_02631</name>
</gene>
<proteinExistence type="inferred from homology"/>
<comment type="function">
    <text evidence="2">Catalyzes the formation of N(7)-methylguanine at position 46 (m7G46) in tRNA.</text>
</comment>
<comment type="catalytic activity">
    <reaction evidence="2">
        <text>guanosine(46) in tRNA + S-adenosyl-L-methionine = N(7)-methylguanosine(46) in tRNA + S-adenosyl-L-homocysteine</text>
        <dbReference type="Rhea" id="RHEA:42708"/>
        <dbReference type="Rhea" id="RHEA-COMP:10188"/>
        <dbReference type="Rhea" id="RHEA-COMP:10189"/>
        <dbReference type="ChEBI" id="CHEBI:57856"/>
        <dbReference type="ChEBI" id="CHEBI:59789"/>
        <dbReference type="ChEBI" id="CHEBI:74269"/>
        <dbReference type="ChEBI" id="CHEBI:74480"/>
        <dbReference type="EC" id="2.1.1.33"/>
    </reaction>
</comment>
<comment type="pathway">
    <text evidence="2">tRNA modification; N(7)-methylguanine-tRNA biosynthesis.</text>
</comment>
<comment type="similarity">
    <text evidence="2">Belongs to the class I-like SAM-binding methyltransferase superfamily. TrmB family.</text>
</comment>
<protein>
    <recommendedName>
        <fullName evidence="2">tRNA (guanine-N(7)-)-methyltransferase</fullName>
        <ecNumber evidence="2">2.1.1.33</ecNumber>
    </recommendedName>
    <alternativeName>
        <fullName evidence="2">tRNA (guanine(46)-N(7))-methyltransferase</fullName>
    </alternativeName>
    <alternativeName>
        <fullName evidence="2">tRNA(m7G46)-methyltransferase</fullName>
    </alternativeName>
</protein>